<accession>B5FJJ9</accession>
<name>RL6_SALDC</name>
<evidence type="ECO:0000255" key="1">
    <source>
        <dbReference type="HAMAP-Rule" id="MF_01365"/>
    </source>
</evidence>
<evidence type="ECO:0000305" key="2"/>
<sequence length="177" mass="18830">MSRVAKAPVVVPAGVDVKINGQVITIKGKNGELTRTLNDAVEVKHADNALTFGPRDGYADGWAQAGTARALLNSMVIGVTEGFTKKLQLVGVGYRAAVKGNVVNLSLGFSHPVDHQLPAGITAECPTQAEIVLKGADKQVIGQVAADLRAYRRPEPYKGKGVRYADEVVRTKEAKKK</sequence>
<protein>
    <recommendedName>
        <fullName evidence="1">Large ribosomal subunit protein uL6</fullName>
    </recommendedName>
    <alternativeName>
        <fullName evidence="2">50S ribosomal protein L6</fullName>
    </alternativeName>
</protein>
<feature type="chain" id="PRO_1000144041" description="Large ribosomal subunit protein uL6">
    <location>
        <begin position="1"/>
        <end position="177"/>
    </location>
</feature>
<dbReference type="EMBL" id="CP001144">
    <property type="protein sequence ID" value="ACH75458.1"/>
    <property type="molecule type" value="Genomic_DNA"/>
</dbReference>
<dbReference type="RefSeq" id="WP_000091938.1">
    <property type="nucleotide sequence ID" value="NC_011205.1"/>
</dbReference>
<dbReference type="SMR" id="B5FJJ9"/>
<dbReference type="KEGG" id="sed:SeD_A3792"/>
<dbReference type="HOGENOM" id="CLU_065464_1_2_6"/>
<dbReference type="Proteomes" id="UP000008322">
    <property type="component" value="Chromosome"/>
</dbReference>
<dbReference type="GO" id="GO:0022625">
    <property type="term" value="C:cytosolic large ribosomal subunit"/>
    <property type="evidence" value="ECO:0007669"/>
    <property type="project" value="TreeGrafter"/>
</dbReference>
<dbReference type="GO" id="GO:0019843">
    <property type="term" value="F:rRNA binding"/>
    <property type="evidence" value="ECO:0007669"/>
    <property type="project" value="UniProtKB-UniRule"/>
</dbReference>
<dbReference type="GO" id="GO:0003735">
    <property type="term" value="F:structural constituent of ribosome"/>
    <property type="evidence" value="ECO:0007669"/>
    <property type="project" value="InterPro"/>
</dbReference>
<dbReference type="GO" id="GO:0002181">
    <property type="term" value="P:cytoplasmic translation"/>
    <property type="evidence" value="ECO:0007669"/>
    <property type="project" value="TreeGrafter"/>
</dbReference>
<dbReference type="FunFam" id="3.90.930.12:FF:000001">
    <property type="entry name" value="50S ribosomal protein L6"/>
    <property type="match status" value="1"/>
</dbReference>
<dbReference type="FunFam" id="3.90.930.12:FF:000002">
    <property type="entry name" value="50S ribosomal protein L6"/>
    <property type="match status" value="1"/>
</dbReference>
<dbReference type="Gene3D" id="3.90.930.12">
    <property type="entry name" value="Ribosomal protein L6, alpha-beta domain"/>
    <property type="match status" value="2"/>
</dbReference>
<dbReference type="HAMAP" id="MF_01365_B">
    <property type="entry name" value="Ribosomal_uL6_B"/>
    <property type="match status" value="1"/>
</dbReference>
<dbReference type="InterPro" id="IPR000702">
    <property type="entry name" value="Ribosomal_uL6-like"/>
</dbReference>
<dbReference type="InterPro" id="IPR036789">
    <property type="entry name" value="Ribosomal_uL6-like_a/b-dom_sf"/>
</dbReference>
<dbReference type="InterPro" id="IPR020040">
    <property type="entry name" value="Ribosomal_uL6_a/b-dom"/>
</dbReference>
<dbReference type="InterPro" id="IPR019906">
    <property type="entry name" value="Ribosomal_uL6_bac-type"/>
</dbReference>
<dbReference type="InterPro" id="IPR002358">
    <property type="entry name" value="Ribosomal_uL6_CS"/>
</dbReference>
<dbReference type="NCBIfam" id="TIGR03654">
    <property type="entry name" value="L6_bact"/>
    <property type="match status" value="1"/>
</dbReference>
<dbReference type="PANTHER" id="PTHR11655">
    <property type="entry name" value="60S/50S RIBOSOMAL PROTEIN L6/L9"/>
    <property type="match status" value="1"/>
</dbReference>
<dbReference type="PANTHER" id="PTHR11655:SF14">
    <property type="entry name" value="LARGE RIBOSOMAL SUBUNIT PROTEIN UL6M"/>
    <property type="match status" value="1"/>
</dbReference>
<dbReference type="Pfam" id="PF00347">
    <property type="entry name" value="Ribosomal_L6"/>
    <property type="match status" value="2"/>
</dbReference>
<dbReference type="PIRSF" id="PIRSF002162">
    <property type="entry name" value="Ribosomal_L6"/>
    <property type="match status" value="1"/>
</dbReference>
<dbReference type="PRINTS" id="PR00059">
    <property type="entry name" value="RIBOSOMALL6"/>
</dbReference>
<dbReference type="SUPFAM" id="SSF56053">
    <property type="entry name" value="Ribosomal protein L6"/>
    <property type="match status" value="2"/>
</dbReference>
<dbReference type="PROSITE" id="PS00525">
    <property type="entry name" value="RIBOSOMAL_L6_1"/>
    <property type="match status" value="1"/>
</dbReference>
<gene>
    <name evidence="1" type="primary">rplF</name>
    <name type="ordered locus">SeD_A3792</name>
</gene>
<proteinExistence type="inferred from homology"/>
<reference key="1">
    <citation type="journal article" date="2011" name="J. Bacteriol.">
        <title>Comparative genomics of 28 Salmonella enterica isolates: evidence for CRISPR-mediated adaptive sublineage evolution.</title>
        <authorList>
            <person name="Fricke W.F."/>
            <person name="Mammel M.K."/>
            <person name="McDermott P.F."/>
            <person name="Tartera C."/>
            <person name="White D.G."/>
            <person name="Leclerc J.E."/>
            <person name="Ravel J."/>
            <person name="Cebula T.A."/>
        </authorList>
    </citation>
    <scope>NUCLEOTIDE SEQUENCE [LARGE SCALE GENOMIC DNA]</scope>
    <source>
        <strain>CT_02021853</strain>
    </source>
</reference>
<keyword id="KW-0687">Ribonucleoprotein</keyword>
<keyword id="KW-0689">Ribosomal protein</keyword>
<keyword id="KW-0694">RNA-binding</keyword>
<keyword id="KW-0699">rRNA-binding</keyword>
<organism>
    <name type="scientific">Salmonella dublin (strain CT_02021853)</name>
    <dbReference type="NCBI Taxonomy" id="439851"/>
    <lineage>
        <taxon>Bacteria</taxon>
        <taxon>Pseudomonadati</taxon>
        <taxon>Pseudomonadota</taxon>
        <taxon>Gammaproteobacteria</taxon>
        <taxon>Enterobacterales</taxon>
        <taxon>Enterobacteriaceae</taxon>
        <taxon>Salmonella</taxon>
    </lineage>
</organism>
<comment type="function">
    <text evidence="1">This protein binds to the 23S rRNA, and is important in its secondary structure. It is located near the subunit interface in the base of the L7/L12 stalk, and near the tRNA binding site of the peptidyltransferase center.</text>
</comment>
<comment type="subunit">
    <text evidence="1">Part of the 50S ribosomal subunit.</text>
</comment>
<comment type="similarity">
    <text evidence="1">Belongs to the universal ribosomal protein uL6 family.</text>
</comment>